<name>MMSB_MYCBO</name>
<accession>P63936</accession>
<accession>A0A1R3XYF6</accession>
<accession>O53814</accession>
<accession>X2BFW4</accession>
<dbReference type="EC" id="1.1.1.31"/>
<dbReference type="EMBL" id="LT708304">
    <property type="protein sequence ID" value="SIT99372.1"/>
    <property type="molecule type" value="Genomic_DNA"/>
</dbReference>
<dbReference type="RefSeq" id="NP_854431.1">
    <property type="nucleotide sequence ID" value="NC_002945.3"/>
</dbReference>
<dbReference type="RefSeq" id="WP_003403844.1">
    <property type="nucleotide sequence ID" value="NC_002945.4"/>
</dbReference>
<dbReference type="SMR" id="P63936"/>
<dbReference type="GeneID" id="45424715"/>
<dbReference type="KEGG" id="mbo:BQ2027_MB0773C"/>
<dbReference type="PATRIC" id="fig|233413.5.peg.843"/>
<dbReference type="UniPathway" id="UPA00362"/>
<dbReference type="Proteomes" id="UP000001419">
    <property type="component" value="Chromosome"/>
</dbReference>
<dbReference type="GO" id="GO:0008442">
    <property type="term" value="F:3-hydroxyisobutyrate dehydrogenase activity"/>
    <property type="evidence" value="ECO:0007669"/>
    <property type="project" value="UniProtKB-EC"/>
</dbReference>
<dbReference type="GO" id="GO:0051287">
    <property type="term" value="F:NAD binding"/>
    <property type="evidence" value="ECO:0007669"/>
    <property type="project" value="InterPro"/>
</dbReference>
<dbReference type="GO" id="GO:0050661">
    <property type="term" value="F:NADP binding"/>
    <property type="evidence" value="ECO:0007669"/>
    <property type="project" value="InterPro"/>
</dbReference>
<dbReference type="GO" id="GO:0006574">
    <property type="term" value="P:valine catabolic process"/>
    <property type="evidence" value="ECO:0007669"/>
    <property type="project" value="UniProtKB-UniPathway"/>
</dbReference>
<dbReference type="FunFam" id="1.10.1040.10:FF:000006">
    <property type="entry name" value="3-hydroxyisobutyrate dehydrogenase"/>
    <property type="match status" value="1"/>
</dbReference>
<dbReference type="Gene3D" id="1.10.1040.10">
    <property type="entry name" value="N-(1-d-carboxylethyl)-l-norvaline Dehydrogenase, domain 2"/>
    <property type="match status" value="1"/>
</dbReference>
<dbReference type="Gene3D" id="3.40.50.720">
    <property type="entry name" value="NAD(P)-binding Rossmann-like Domain"/>
    <property type="match status" value="1"/>
</dbReference>
<dbReference type="InterPro" id="IPR002204">
    <property type="entry name" value="3-OH-isobutyrate_DH-rel_CS"/>
</dbReference>
<dbReference type="InterPro" id="IPR008927">
    <property type="entry name" value="6-PGluconate_DH-like_C_sf"/>
</dbReference>
<dbReference type="InterPro" id="IPR013328">
    <property type="entry name" value="6PGD_dom2"/>
</dbReference>
<dbReference type="InterPro" id="IPR006115">
    <property type="entry name" value="6PGDH_NADP-bd"/>
</dbReference>
<dbReference type="InterPro" id="IPR011548">
    <property type="entry name" value="HIBADH"/>
</dbReference>
<dbReference type="InterPro" id="IPR029154">
    <property type="entry name" value="HIBADH-like_NADP-bd"/>
</dbReference>
<dbReference type="InterPro" id="IPR015815">
    <property type="entry name" value="HIBADH-related"/>
</dbReference>
<dbReference type="InterPro" id="IPR036291">
    <property type="entry name" value="NAD(P)-bd_dom_sf"/>
</dbReference>
<dbReference type="NCBIfam" id="TIGR01692">
    <property type="entry name" value="HIBADH"/>
    <property type="match status" value="1"/>
</dbReference>
<dbReference type="PANTHER" id="PTHR22981:SF7">
    <property type="entry name" value="3-HYDROXYISOBUTYRATE DEHYDROGENASE, MITOCHONDRIAL"/>
    <property type="match status" value="1"/>
</dbReference>
<dbReference type="PANTHER" id="PTHR22981">
    <property type="entry name" value="3-HYDROXYISOBUTYRATE DEHYDROGENASE-RELATED"/>
    <property type="match status" value="1"/>
</dbReference>
<dbReference type="Pfam" id="PF14833">
    <property type="entry name" value="NAD_binding_11"/>
    <property type="match status" value="1"/>
</dbReference>
<dbReference type="Pfam" id="PF03446">
    <property type="entry name" value="NAD_binding_2"/>
    <property type="match status" value="1"/>
</dbReference>
<dbReference type="PIRSF" id="PIRSF000103">
    <property type="entry name" value="HIBADH"/>
    <property type="match status" value="1"/>
</dbReference>
<dbReference type="SUPFAM" id="SSF48179">
    <property type="entry name" value="6-phosphogluconate dehydrogenase C-terminal domain-like"/>
    <property type="match status" value="1"/>
</dbReference>
<dbReference type="SUPFAM" id="SSF51735">
    <property type="entry name" value="NAD(P)-binding Rossmann-fold domains"/>
    <property type="match status" value="1"/>
</dbReference>
<dbReference type="PROSITE" id="PS00895">
    <property type="entry name" value="3_HYDROXYISOBUT_DH"/>
    <property type="match status" value="1"/>
</dbReference>
<protein>
    <recommendedName>
        <fullName>Probable 3-hydroxyisobutyrate dehydrogenase</fullName>
        <shortName>HIBADH</shortName>
        <ecNumber>1.1.1.31</ecNumber>
    </recommendedName>
</protein>
<feature type="chain" id="PRO_0000173057" description="Probable 3-hydroxyisobutyrate dehydrogenase">
    <location>
        <begin position="1"/>
        <end position="294"/>
    </location>
</feature>
<feature type="active site" evidence="1">
    <location>
        <position position="168"/>
    </location>
</feature>
<feature type="binding site" evidence="1">
    <location>
        <begin position="3"/>
        <end position="31"/>
    </location>
    <ligand>
        <name>NAD(+)</name>
        <dbReference type="ChEBI" id="CHEBI:57540"/>
    </ligand>
</feature>
<feature type="binding site" evidence="1">
    <location>
        <position position="93"/>
    </location>
    <ligand>
        <name>NAD(+)</name>
        <dbReference type="ChEBI" id="CHEBI:57540"/>
    </ligand>
</feature>
<feature type="binding site" evidence="1">
    <location>
        <position position="243"/>
    </location>
    <ligand>
        <name>NAD(+)</name>
        <dbReference type="ChEBI" id="CHEBI:57540"/>
    </ligand>
</feature>
<proteinExistence type="inferred from homology"/>
<sequence>MTTIAFLGLGNMGAPMSANLVGAGHVVRGFDPAPTAASGAAAHGVAVFRSAPEAVAEADVVITMLPTGEVVRRCYTDVLAAARPATLFIDSSTISVTDAREVHALAESHGMLQLDAPVSGGVKGAAAATLAFMVGGDESTLRRARPVLEPMAGKIIHCGAAGAGQAAKVCNNMVLAVQQIAIAEAFVLAEKLGLSAQSLFDVITGATGNCWAVHTNCPVPGPVPTSPANNDFKPGFSTALMNKDLGLAMDAVAATGATAPLGSHAADIYAKFAADHADLDFSAVIHTLRARADA</sequence>
<evidence type="ECO:0000250" key="1"/>
<evidence type="ECO:0000305" key="2"/>
<organism>
    <name type="scientific">Mycobacterium bovis (strain ATCC BAA-935 / AF2122/97)</name>
    <dbReference type="NCBI Taxonomy" id="233413"/>
    <lineage>
        <taxon>Bacteria</taxon>
        <taxon>Bacillati</taxon>
        <taxon>Actinomycetota</taxon>
        <taxon>Actinomycetes</taxon>
        <taxon>Mycobacteriales</taxon>
        <taxon>Mycobacteriaceae</taxon>
        <taxon>Mycobacterium</taxon>
        <taxon>Mycobacterium tuberculosis complex</taxon>
    </lineage>
</organism>
<comment type="catalytic activity">
    <reaction>
        <text>3-hydroxy-2-methylpropanoate + NAD(+) = 2-methyl-3-oxopropanoate + NADH + H(+)</text>
        <dbReference type="Rhea" id="RHEA:17681"/>
        <dbReference type="ChEBI" id="CHEBI:11805"/>
        <dbReference type="ChEBI" id="CHEBI:15378"/>
        <dbReference type="ChEBI" id="CHEBI:57540"/>
        <dbReference type="ChEBI" id="CHEBI:57700"/>
        <dbReference type="ChEBI" id="CHEBI:57945"/>
        <dbReference type="EC" id="1.1.1.31"/>
    </reaction>
</comment>
<comment type="pathway">
    <text>Amino-acid degradation; L-valine degradation.</text>
</comment>
<comment type="similarity">
    <text evidence="2">Belongs to the HIBADH-related family.</text>
</comment>
<reference key="1">
    <citation type="journal article" date="2003" name="Proc. Natl. Acad. Sci. U.S.A.">
        <title>The complete genome sequence of Mycobacterium bovis.</title>
        <authorList>
            <person name="Garnier T."/>
            <person name="Eiglmeier K."/>
            <person name="Camus J.-C."/>
            <person name="Medina N."/>
            <person name="Mansoor H."/>
            <person name="Pryor M."/>
            <person name="Duthoy S."/>
            <person name="Grondin S."/>
            <person name="Lacroix C."/>
            <person name="Monsempe C."/>
            <person name="Simon S."/>
            <person name="Harris B."/>
            <person name="Atkin R."/>
            <person name="Doggett J."/>
            <person name="Mayes R."/>
            <person name="Keating L."/>
            <person name="Wheeler P.R."/>
            <person name="Parkhill J."/>
            <person name="Barrell B.G."/>
            <person name="Cole S.T."/>
            <person name="Gordon S.V."/>
            <person name="Hewinson R.G."/>
        </authorList>
    </citation>
    <scope>NUCLEOTIDE SEQUENCE [LARGE SCALE GENOMIC DNA]</scope>
    <source>
        <strain>ATCC BAA-935 / AF2122/97</strain>
    </source>
</reference>
<reference key="2">
    <citation type="journal article" date="2017" name="Genome Announc.">
        <title>Updated reference genome sequence and annotation of Mycobacterium bovis AF2122/97.</title>
        <authorList>
            <person name="Malone K.M."/>
            <person name="Farrell D."/>
            <person name="Stuber T.P."/>
            <person name="Schubert O.T."/>
            <person name="Aebersold R."/>
            <person name="Robbe-Austerman S."/>
            <person name="Gordon S.V."/>
        </authorList>
    </citation>
    <scope>NUCLEOTIDE SEQUENCE [LARGE SCALE GENOMIC DNA]</scope>
    <scope>GENOME REANNOTATION</scope>
    <source>
        <strain>ATCC BAA-935 / AF2122/97</strain>
    </source>
</reference>
<keyword id="KW-0101">Branched-chain amino acid catabolism</keyword>
<keyword id="KW-0520">NAD</keyword>
<keyword id="KW-0560">Oxidoreductase</keyword>
<keyword id="KW-1185">Reference proteome</keyword>
<gene>
    <name type="primary">mmsB</name>
    <name type="ordered locus">BQ2027_MB0773C</name>
</gene>